<feature type="chain" id="PRO_0000416027" description="CMP-sialic acid transporter 4">
    <location>
        <begin position="1"/>
        <end position="352"/>
    </location>
</feature>
<feature type="topological domain" description="Cytoplasmic" evidence="2">
    <location>
        <begin position="1"/>
        <end position="51"/>
    </location>
</feature>
<feature type="transmembrane region" description="Helical" evidence="2">
    <location>
        <begin position="52"/>
        <end position="72"/>
    </location>
</feature>
<feature type="topological domain" description="Lumenal" evidence="2">
    <location>
        <begin position="73"/>
        <end position="81"/>
    </location>
</feature>
<feature type="transmembrane region" description="Helical" evidence="2">
    <location>
        <begin position="82"/>
        <end position="102"/>
    </location>
</feature>
<feature type="topological domain" description="Cytoplasmic" evidence="2">
    <location>
        <begin position="103"/>
        <end position="124"/>
    </location>
</feature>
<feature type="transmembrane region" description="Helical" evidence="2">
    <location>
        <begin position="125"/>
        <end position="145"/>
    </location>
</feature>
<feature type="topological domain" description="Lumenal" evidence="2">
    <location>
        <begin position="146"/>
        <end position="174"/>
    </location>
</feature>
<feature type="transmembrane region" description="Helical" evidence="2">
    <location>
        <begin position="175"/>
        <end position="195"/>
    </location>
</feature>
<feature type="topological domain" description="Cytoplasmic" evidence="2">
    <location>
        <begin position="196"/>
        <end position="210"/>
    </location>
</feature>
<feature type="transmembrane region" description="Helical" evidence="2">
    <location>
        <begin position="211"/>
        <end position="231"/>
    </location>
</feature>
<feature type="topological domain" description="Lumenal" evidence="2">
    <location>
        <begin position="232"/>
        <end position="238"/>
    </location>
</feature>
<feature type="transmembrane region" description="Helical" evidence="2">
    <location>
        <begin position="239"/>
        <end position="259"/>
    </location>
</feature>
<feature type="topological domain" description="Cytoplasmic" evidence="2">
    <location>
        <begin position="260"/>
        <end position="276"/>
    </location>
</feature>
<feature type="transmembrane region" description="Helical" evidence="2">
    <location>
        <begin position="277"/>
        <end position="297"/>
    </location>
</feature>
<feature type="topological domain" description="Lumenal" evidence="2">
    <location>
        <begin position="298"/>
        <end position="313"/>
    </location>
</feature>
<feature type="transmembrane region" description="Helical" evidence="2">
    <location>
        <begin position="314"/>
        <end position="334"/>
    </location>
</feature>
<feature type="topological domain" description="Cytoplasmic" evidence="2">
    <location>
        <begin position="335"/>
        <end position="352"/>
    </location>
</feature>
<feature type="sequence conflict" description="In Ref. 3; AAT70424/AAU94410 and 4; BAD44204." evidence="4" ref="3 4">
    <original>G</original>
    <variation>E</variation>
    <location>
        <position position="90"/>
    </location>
</feature>
<proteinExistence type="evidence at transcript level"/>
<reference key="1">
    <citation type="journal article" date="1999" name="Nature">
        <title>Sequence and analysis of chromosome 4 of the plant Arabidopsis thaliana.</title>
        <authorList>
            <person name="Mayer K.F.X."/>
            <person name="Schueller C."/>
            <person name="Wambutt R."/>
            <person name="Murphy G."/>
            <person name="Volckaert G."/>
            <person name="Pohl T."/>
            <person name="Duesterhoeft A."/>
            <person name="Stiekema W."/>
            <person name="Entian K.-D."/>
            <person name="Terryn N."/>
            <person name="Harris B."/>
            <person name="Ansorge W."/>
            <person name="Brandt P."/>
            <person name="Grivell L.A."/>
            <person name="Rieger M."/>
            <person name="Weichselgartner M."/>
            <person name="de Simone V."/>
            <person name="Obermaier B."/>
            <person name="Mache R."/>
            <person name="Mueller M."/>
            <person name="Kreis M."/>
            <person name="Delseny M."/>
            <person name="Puigdomenech P."/>
            <person name="Watson M."/>
            <person name="Schmidtheini T."/>
            <person name="Reichert B."/>
            <person name="Portetelle D."/>
            <person name="Perez-Alonso M."/>
            <person name="Boutry M."/>
            <person name="Bancroft I."/>
            <person name="Vos P."/>
            <person name="Hoheisel J."/>
            <person name="Zimmermann W."/>
            <person name="Wedler H."/>
            <person name="Ridley P."/>
            <person name="Langham S.-A."/>
            <person name="McCullagh B."/>
            <person name="Bilham L."/>
            <person name="Robben J."/>
            <person name="van der Schueren J."/>
            <person name="Grymonprez B."/>
            <person name="Chuang Y.-J."/>
            <person name="Vandenbussche F."/>
            <person name="Braeken M."/>
            <person name="Weltjens I."/>
            <person name="Voet M."/>
            <person name="Bastiaens I."/>
            <person name="Aert R."/>
            <person name="Defoor E."/>
            <person name="Weitzenegger T."/>
            <person name="Bothe G."/>
            <person name="Ramsperger U."/>
            <person name="Hilbert H."/>
            <person name="Braun M."/>
            <person name="Holzer E."/>
            <person name="Brandt A."/>
            <person name="Peters S."/>
            <person name="van Staveren M."/>
            <person name="Dirkse W."/>
            <person name="Mooijman P."/>
            <person name="Klein Lankhorst R."/>
            <person name="Rose M."/>
            <person name="Hauf J."/>
            <person name="Koetter P."/>
            <person name="Berneiser S."/>
            <person name="Hempel S."/>
            <person name="Feldpausch M."/>
            <person name="Lamberth S."/>
            <person name="Van den Daele H."/>
            <person name="De Keyser A."/>
            <person name="Buysshaert C."/>
            <person name="Gielen J."/>
            <person name="Villarroel R."/>
            <person name="De Clercq R."/>
            <person name="van Montagu M."/>
            <person name="Rogers J."/>
            <person name="Cronin A."/>
            <person name="Quail M.A."/>
            <person name="Bray-Allen S."/>
            <person name="Clark L."/>
            <person name="Doggett J."/>
            <person name="Hall S."/>
            <person name="Kay M."/>
            <person name="Lennard N."/>
            <person name="McLay K."/>
            <person name="Mayes R."/>
            <person name="Pettett A."/>
            <person name="Rajandream M.A."/>
            <person name="Lyne M."/>
            <person name="Benes V."/>
            <person name="Rechmann S."/>
            <person name="Borkova D."/>
            <person name="Bloecker H."/>
            <person name="Scharfe M."/>
            <person name="Grimm M."/>
            <person name="Loehnert T.-H."/>
            <person name="Dose S."/>
            <person name="de Haan M."/>
            <person name="Maarse A.C."/>
            <person name="Schaefer M."/>
            <person name="Mueller-Auer S."/>
            <person name="Gabel C."/>
            <person name="Fuchs M."/>
            <person name="Fartmann B."/>
            <person name="Granderath K."/>
            <person name="Dauner D."/>
            <person name="Herzl A."/>
            <person name="Neumann S."/>
            <person name="Argiriou A."/>
            <person name="Vitale D."/>
            <person name="Liguori R."/>
            <person name="Piravandi E."/>
            <person name="Massenet O."/>
            <person name="Quigley F."/>
            <person name="Clabauld G."/>
            <person name="Muendlein A."/>
            <person name="Felber R."/>
            <person name="Schnabl S."/>
            <person name="Hiller R."/>
            <person name="Schmidt W."/>
            <person name="Lecharny A."/>
            <person name="Aubourg S."/>
            <person name="Chefdor F."/>
            <person name="Cooke R."/>
            <person name="Berger C."/>
            <person name="Monfort A."/>
            <person name="Casacuberta E."/>
            <person name="Gibbons T."/>
            <person name="Weber N."/>
            <person name="Vandenbol M."/>
            <person name="Bargues M."/>
            <person name="Terol J."/>
            <person name="Torres A."/>
            <person name="Perez-Perez A."/>
            <person name="Purnelle B."/>
            <person name="Bent E."/>
            <person name="Johnson S."/>
            <person name="Tacon D."/>
            <person name="Jesse T."/>
            <person name="Heijnen L."/>
            <person name="Schwarz S."/>
            <person name="Scholler P."/>
            <person name="Heber S."/>
            <person name="Francs P."/>
            <person name="Bielke C."/>
            <person name="Frishman D."/>
            <person name="Haase D."/>
            <person name="Lemcke K."/>
            <person name="Mewes H.-W."/>
            <person name="Stocker S."/>
            <person name="Zaccaria P."/>
            <person name="Bevan M."/>
            <person name="Wilson R.K."/>
            <person name="de la Bastide M."/>
            <person name="Habermann K."/>
            <person name="Parnell L."/>
            <person name="Dedhia N."/>
            <person name="Gnoj L."/>
            <person name="Schutz K."/>
            <person name="Huang E."/>
            <person name="Spiegel L."/>
            <person name="Sekhon M."/>
            <person name="Murray J."/>
            <person name="Sheet P."/>
            <person name="Cordes M."/>
            <person name="Abu-Threideh J."/>
            <person name="Stoneking T."/>
            <person name="Kalicki J."/>
            <person name="Graves T."/>
            <person name="Harmon G."/>
            <person name="Edwards J."/>
            <person name="Latreille P."/>
            <person name="Courtney L."/>
            <person name="Cloud J."/>
            <person name="Abbott A."/>
            <person name="Scott K."/>
            <person name="Johnson D."/>
            <person name="Minx P."/>
            <person name="Bentley D."/>
            <person name="Fulton B."/>
            <person name="Miller N."/>
            <person name="Greco T."/>
            <person name="Kemp K."/>
            <person name="Kramer J."/>
            <person name="Fulton L."/>
            <person name="Mardis E."/>
            <person name="Dante M."/>
            <person name="Pepin K."/>
            <person name="Hillier L.W."/>
            <person name="Nelson J."/>
            <person name="Spieth J."/>
            <person name="Ryan E."/>
            <person name="Andrews S."/>
            <person name="Geisel C."/>
            <person name="Layman D."/>
            <person name="Du H."/>
            <person name="Ali J."/>
            <person name="Berghoff A."/>
            <person name="Jones K."/>
            <person name="Drone K."/>
            <person name="Cotton M."/>
            <person name="Joshu C."/>
            <person name="Antonoiu B."/>
            <person name="Zidanic M."/>
            <person name="Strong C."/>
            <person name="Sun H."/>
            <person name="Lamar B."/>
            <person name="Yordan C."/>
            <person name="Ma P."/>
            <person name="Zhong J."/>
            <person name="Preston R."/>
            <person name="Vil D."/>
            <person name="Shekher M."/>
            <person name="Matero A."/>
            <person name="Shah R."/>
            <person name="Swaby I.K."/>
            <person name="O'Shaughnessy A."/>
            <person name="Rodriguez M."/>
            <person name="Hoffman J."/>
            <person name="Till S."/>
            <person name="Granat S."/>
            <person name="Shohdy N."/>
            <person name="Hasegawa A."/>
            <person name="Hameed A."/>
            <person name="Lodhi M."/>
            <person name="Johnson A."/>
            <person name="Chen E."/>
            <person name="Marra M.A."/>
            <person name="Martienssen R."/>
            <person name="McCombie W.R."/>
        </authorList>
    </citation>
    <scope>NUCLEOTIDE SEQUENCE [LARGE SCALE GENOMIC DNA]</scope>
    <source>
        <strain>cv. Columbia</strain>
    </source>
</reference>
<reference key="2">
    <citation type="journal article" date="2017" name="Plant J.">
        <title>Araport11: a complete reannotation of the Arabidopsis thaliana reference genome.</title>
        <authorList>
            <person name="Cheng C.Y."/>
            <person name="Krishnakumar V."/>
            <person name="Chan A.P."/>
            <person name="Thibaud-Nissen F."/>
            <person name="Schobel S."/>
            <person name="Town C.D."/>
        </authorList>
    </citation>
    <scope>GENOME REANNOTATION</scope>
    <source>
        <strain>cv. Columbia</strain>
    </source>
</reference>
<reference key="3">
    <citation type="submission" date="2004-09" db="EMBL/GenBank/DDBJ databases">
        <title>Large-scale analysis of RIKEN Arabidopsis full-length (RAFL) cDNAs.</title>
        <authorList>
            <person name="Totoki Y."/>
            <person name="Seki M."/>
            <person name="Ishida J."/>
            <person name="Nakajima M."/>
            <person name="Enju A."/>
            <person name="Kamiya A."/>
            <person name="Narusaka M."/>
            <person name="Shin-i T."/>
            <person name="Nakagawa M."/>
            <person name="Sakamoto N."/>
            <person name="Oishi K."/>
            <person name="Kohara Y."/>
            <person name="Kobayashi M."/>
            <person name="Toyoda A."/>
            <person name="Sakaki Y."/>
            <person name="Sakurai T."/>
            <person name="Iida K."/>
            <person name="Akiyama K."/>
            <person name="Satou M."/>
            <person name="Toyoda T."/>
            <person name="Konagaya A."/>
            <person name="Carninci P."/>
            <person name="Kawai J."/>
            <person name="Hayashizaki Y."/>
            <person name="Shinozaki K."/>
        </authorList>
    </citation>
    <scope>NUCLEOTIDE SEQUENCE [LARGE SCALE MRNA]</scope>
    <source>
        <strain>cv. Columbia</strain>
    </source>
</reference>
<reference key="4">
    <citation type="submission" date="2004-10" db="EMBL/GenBank/DDBJ databases">
        <title>Arabidopsis ORF clones.</title>
        <authorList>
            <person name="Kim C.J."/>
            <person name="Chen H."/>
            <person name="Cheuk R.F."/>
            <person name="Shinn P."/>
            <person name="Ecker J.R."/>
        </authorList>
    </citation>
    <scope>NUCLEOTIDE SEQUENCE [LARGE SCALE MRNA]</scope>
</reference>
<reference key="5">
    <citation type="journal article" date="2009" name="Phytochemistry">
        <title>Analysis of CMP-sialic acid transporter-like proteins in plants.</title>
        <authorList>
            <person name="Takashima S."/>
            <person name="Seino J."/>
            <person name="Nakano T."/>
            <person name="Fujiyama K."/>
            <person name="Tsujimoto M."/>
            <person name="Ishida N."/>
            <person name="Hashimoto Y."/>
        </authorList>
    </citation>
    <scope>FUNCTION</scope>
</reference>
<reference key="6">
    <citation type="journal article" date="2014" name="Proc. Natl. Acad. Sci. U.S.A.">
        <title>The Golgi localized bifunctional UDP-rhamnose/UDP-galactose transporter family of Arabidopsis.</title>
        <authorList>
            <person name="Rautengarten C."/>
            <person name="Ebert B."/>
            <person name="Moreno I."/>
            <person name="Temple H."/>
            <person name="Herter T."/>
            <person name="Link B."/>
            <person name="Donas-Cofre D."/>
            <person name="Moreno A."/>
            <person name="Saez-Aguayo S."/>
            <person name="Blanco F."/>
            <person name="Mortimer J.C."/>
            <person name="Schultink A."/>
            <person name="Reiter W.D."/>
            <person name="Dupree P."/>
            <person name="Pauly M."/>
            <person name="Heazlewood J.L."/>
            <person name="Scheller H.V."/>
            <person name="Orellana A."/>
        </authorList>
    </citation>
    <scope>GENE FAMILY</scope>
</reference>
<comment type="function">
    <text evidence="1 3">Sugar transporter involved in the transport of CMP-sialic acid from the cytoplasm into the Golgi (By similarity). Essential protein.</text>
</comment>
<comment type="subcellular location">
    <subcellularLocation>
        <location evidence="1">Golgi apparatus membrane</location>
        <topology evidence="1">Multi-pass membrane protein</topology>
    </subcellularLocation>
</comment>
<comment type="similarity">
    <text evidence="4">Belongs to the nucleotide-sugar transporter family. CMP-Sialate:CMP antiporter (TC 2.A.7.12) subfamily.</text>
</comment>
<comment type="sequence caution" evidence="4">
    <conflict type="erroneous gene model prediction">
        <sequence resource="EMBL-CDS" id="CAA18735"/>
    </conflict>
    <text>Was originally thought to correspond to two different genes At4g35330 and At4g35340.</text>
</comment>
<comment type="sequence caution" evidence="4">
    <conflict type="erroneous gene model prediction">
        <sequence resource="EMBL-CDS" id="CAA18736"/>
    </conflict>
    <text>Was originally thought to correspond to two different genes At4g35330 and At4g35340.</text>
</comment>
<comment type="sequence caution" evidence="4">
    <conflict type="erroneous gene model prediction">
        <sequence resource="EMBL-CDS" id="CAB80250"/>
    </conflict>
    <text>Was originally thought to correspond to two different genes At4g35330 and At4g35340.</text>
</comment>
<comment type="sequence caution" evidence="4">
    <conflict type="erroneous gene model prediction">
        <sequence resource="EMBL-CDS" id="CAB80251"/>
    </conflict>
    <text>Was originally thought to correspond to two different genes At4g35330 and At4g35340.</text>
</comment>
<keyword id="KW-0333">Golgi apparatus</keyword>
<keyword id="KW-0472">Membrane</keyword>
<keyword id="KW-1185">Reference proteome</keyword>
<keyword id="KW-0762">Sugar transport</keyword>
<keyword id="KW-0812">Transmembrane</keyword>
<keyword id="KW-1133">Transmembrane helix</keyword>
<keyword id="KW-0813">Transport</keyword>
<gene>
    <name type="ordered locus">At4g35335</name>
    <name type="ordered locus">At4g35330/At4g35340</name>
    <name type="ORF">F23E12.100/F23E12.110</name>
</gene>
<sequence length="352" mass="38979">MEYRKIKDEDDHDVASDIESVKGKSHTVASSNIAMATLGVGSSERINWKRKGVVTCALTILTSSQAILIVWSKRAGKYEYSVTTANFLVGTLKCALSLLALTRIWKNEGVTDDNRLSTTFDEVKVFPIPAALYLFKNLLQYYIFAYVDAPGYQILKNLNIISTGVLYRIILKRKLSEIQWAGFILLCCGCTTAQLNSNSDRVLQTSLPGWTMAIVMALLSGFAGVYTEAIIKKRPSRNINVQNFWLYVFGMAFNAVAIVIQDFDAVANKGFFHGYSFITLLMILNHALSGIAVSMVMKYADNIVKVYSTSVAMLLTAVVSVFLFNFHLSLAFFLGSTVVSVSVYLHSAGKLR</sequence>
<name>CSTR4_ARATH</name>
<dbReference type="EMBL" id="AL022604">
    <property type="protein sequence ID" value="CAA18735.1"/>
    <property type="status" value="ALT_SEQ"/>
    <property type="molecule type" value="Genomic_DNA"/>
</dbReference>
<dbReference type="EMBL" id="AL022604">
    <property type="protein sequence ID" value="CAA18736.1"/>
    <property type="status" value="ALT_SEQ"/>
    <property type="molecule type" value="Genomic_DNA"/>
</dbReference>
<dbReference type="EMBL" id="AL161587">
    <property type="protein sequence ID" value="CAB80250.1"/>
    <property type="status" value="ALT_SEQ"/>
    <property type="molecule type" value="Genomic_DNA"/>
</dbReference>
<dbReference type="EMBL" id="AL161587">
    <property type="protein sequence ID" value="CAB80251.1"/>
    <property type="status" value="ALT_SEQ"/>
    <property type="molecule type" value="Genomic_DNA"/>
</dbReference>
<dbReference type="EMBL" id="CP002687">
    <property type="status" value="NOT_ANNOTATED_CDS"/>
    <property type="molecule type" value="Genomic_DNA"/>
</dbReference>
<dbReference type="EMBL" id="BT014973">
    <property type="protein sequence ID" value="AAT70424.1"/>
    <property type="molecule type" value="mRNA"/>
</dbReference>
<dbReference type="EMBL" id="BT015847">
    <property type="protein sequence ID" value="AAU94410.1"/>
    <property type="molecule type" value="mRNA"/>
</dbReference>
<dbReference type="EMBL" id="AK176441">
    <property type="protein sequence ID" value="BAD44204.1"/>
    <property type="molecule type" value="mRNA"/>
</dbReference>
<dbReference type="PIR" id="T06123">
    <property type="entry name" value="T06123"/>
</dbReference>
<dbReference type="PIR" id="T06124">
    <property type="entry name" value="T06124"/>
</dbReference>
<dbReference type="SMR" id="F4JN00"/>
<dbReference type="FunCoup" id="F4JN00">
    <property type="interactions" value="1526"/>
</dbReference>
<dbReference type="PaxDb" id="3702-AT4G35335.1"/>
<dbReference type="ProteomicsDB" id="222695"/>
<dbReference type="Araport" id="AT4G35335"/>
<dbReference type="TAIR" id="AT4G35335"/>
<dbReference type="eggNOG" id="KOG2234">
    <property type="taxonomic scope" value="Eukaryota"/>
</dbReference>
<dbReference type="HOGENOM" id="CLU_788909_0_0_1"/>
<dbReference type="InParanoid" id="F4JN00"/>
<dbReference type="PRO" id="PR:F4JN00"/>
<dbReference type="Proteomes" id="UP000006548">
    <property type="component" value="Chromosome 4"/>
</dbReference>
<dbReference type="ExpressionAtlas" id="F4JN00">
    <property type="expression patterns" value="baseline and differential"/>
</dbReference>
<dbReference type="GO" id="GO:0005768">
    <property type="term" value="C:endosome"/>
    <property type="evidence" value="ECO:0007005"/>
    <property type="project" value="TAIR"/>
</dbReference>
<dbReference type="GO" id="GO:0005794">
    <property type="term" value="C:Golgi apparatus"/>
    <property type="evidence" value="ECO:0007005"/>
    <property type="project" value="TAIR"/>
</dbReference>
<dbReference type="GO" id="GO:0000139">
    <property type="term" value="C:Golgi membrane"/>
    <property type="evidence" value="ECO:0000318"/>
    <property type="project" value="GO_Central"/>
</dbReference>
<dbReference type="GO" id="GO:0005802">
    <property type="term" value="C:trans-Golgi network"/>
    <property type="evidence" value="ECO:0007005"/>
    <property type="project" value="TAIR"/>
</dbReference>
<dbReference type="GO" id="GO:0015165">
    <property type="term" value="F:pyrimidine nucleotide-sugar transmembrane transporter activity"/>
    <property type="evidence" value="ECO:0007669"/>
    <property type="project" value="InterPro"/>
</dbReference>
<dbReference type="GO" id="GO:0015136">
    <property type="term" value="F:sialic acid transmembrane transporter activity"/>
    <property type="evidence" value="ECO:0000250"/>
    <property type="project" value="UniProtKB"/>
</dbReference>
<dbReference type="GO" id="GO:0022857">
    <property type="term" value="F:transmembrane transporter activity"/>
    <property type="evidence" value="ECO:0000318"/>
    <property type="project" value="GO_Central"/>
</dbReference>
<dbReference type="GO" id="GO:0015739">
    <property type="term" value="P:sialic acid transport"/>
    <property type="evidence" value="ECO:0000250"/>
    <property type="project" value="UniProtKB"/>
</dbReference>
<dbReference type="GO" id="GO:0055085">
    <property type="term" value="P:transmembrane transport"/>
    <property type="evidence" value="ECO:0000318"/>
    <property type="project" value="GO_Central"/>
</dbReference>
<dbReference type="InterPro" id="IPR007271">
    <property type="entry name" value="Nuc_sug_transpt"/>
</dbReference>
<dbReference type="NCBIfam" id="TIGR00803">
    <property type="entry name" value="nst"/>
    <property type="match status" value="1"/>
</dbReference>
<dbReference type="PANTHER" id="PTHR10231">
    <property type="entry name" value="NUCLEOTIDE-SUGAR TRANSMEMBRANE TRANSPORTER"/>
    <property type="match status" value="1"/>
</dbReference>
<dbReference type="Pfam" id="PF04142">
    <property type="entry name" value="Nuc_sug_transp"/>
    <property type="match status" value="1"/>
</dbReference>
<dbReference type="PIRSF" id="PIRSF005799">
    <property type="entry name" value="UDP-gal_transpt"/>
    <property type="match status" value="1"/>
</dbReference>
<dbReference type="SUPFAM" id="SSF103481">
    <property type="entry name" value="Multidrug resistance efflux transporter EmrE"/>
    <property type="match status" value="1"/>
</dbReference>
<evidence type="ECO:0000250" key="1"/>
<evidence type="ECO:0000255" key="2"/>
<evidence type="ECO:0000269" key="3">
    <source>
    </source>
</evidence>
<evidence type="ECO:0000305" key="4"/>
<accession>F4JN00</accession>
<accession>O65494</accession>
<accession>O65495</accession>
<accession>Q6DBP9</accession>
<protein>
    <recommendedName>
        <fullName>CMP-sialic acid transporter 4</fullName>
        <shortName>CMP-SA-Tr 4</shortName>
        <shortName>CMP-Sia-Tr 4</shortName>
    </recommendedName>
</protein>
<organism>
    <name type="scientific">Arabidopsis thaliana</name>
    <name type="common">Mouse-ear cress</name>
    <dbReference type="NCBI Taxonomy" id="3702"/>
    <lineage>
        <taxon>Eukaryota</taxon>
        <taxon>Viridiplantae</taxon>
        <taxon>Streptophyta</taxon>
        <taxon>Embryophyta</taxon>
        <taxon>Tracheophyta</taxon>
        <taxon>Spermatophyta</taxon>
        <taxon>Magnoliopsida</taxon>
        <taxon>eudicotyledons</taxon>
        <taxon>Gunneridae</taxon>
        <taxon>Pentapetalae</taxon>
        <taxon>rosids</taxon>
        <taxon>malvids</taxon>
        <taxon>Brassicales</taxon>
        <taxon>Brassicaceae</taxon>
        <taxon>Camelineae</taxon>
        <taxon>Arabidopsis</taxon>
    </lineage>
</organism>